<proteinExistence type="inferred from homology"/>
<evidence type="ECO:0000255" key="1">
    <source>
        <dbReference type="HAMAP-Rule" id="MF_01580"/>
    </source>
</evidence>
<dbReference type="EMBL" id="AM933172">
    <property type="protein sequence ID" value="CAR33305.1"/>
    <property type="molecule type" value="Genomic_DNA"/>
</dbReference>
<dbReference type="RefSeq" id="WP_000977510.1">
    <property type="nucleotide sequence ID" value="NC_011294.1"/>
</dbReference>
<dbReference type="SMR" id="B5QWH4"/>
<dbReference type="KEGG" id="set:SEN1724"/>
<dbReference type="HOGENOM" id="CLU_167445_0_0_6"/>
<dbReference type="Proteomes" id="UP000000613">
    <property type="component" value="Chromosome"/>
</dbReference>
<dbReference type="GO" id="GO:0003677">
    <property type="term" value="F:DNA binding"/>
    <property type="evidence" value="ECO:0007669"/>
    <property type="project" value="UniProtKB-UniRule"/>
</dbReference>
<dbReference type="GO" id="GO:0051301">
    <property type="term" value="P:cell division"/>
    <property type="evidence" value="ECO:0007669"/>
    <property type="project" value="UniProtKB-UniRule"/>
</dbReference>
<dbReference type="Gene3D" id="3.30.730.20">
    <property type="entry name" value="Cell division activator CedA"/>
    <property type="match status" value="1"/>
</dbReference>
<dbReference type="HAMAP" id="MF_01580">
    <property type="entry name" value="CedA"/>
    <property type="match status" value="1"/>
</dbReference>
<dbReference type="InterPro" id="IPR038463">
    <property type="entry name" value="CedA-like_sf"/>
</dbReference>
<dbReference type="InterPro" id="IPR019666">
    <property type="entry name" value="Cell_div_activator_CedA"/>
</dbReference>
<dbReference type="NCBIfam" id="NF007510">
    <property type="entry name" value="PRK10113.1"/>
    <property type="match status" value="1"/>
</dbReference>
<dbReference type="Pfam" id="PF10729">
    <property type="entry name" value="CedA"/>
    <property type="match status" value="1"/>
</dbReference>
<reference key="1">
    <citation type="journal article" date="2008" name="Genome Res.">
        <title>Comparative genome analysis of Salmonella enteritidis PT4 and Salmonella gallinarum 287/91 provides insights into evolutionary and host adaptation pathways.</title>
        <authorList>
            <person name="Thomson N.R."/>
            <person name="Clayton D.J."/>
            <person name="Windhorst D."/>
            <person name="Vernikos G."/>
            <person name="Davidson S."/>
            <person name="Churcher C."/>
            <person name="Quail M.A."/>
            <person name="Stevens M."/>
            <person name="Jones M.A."/>
            <person name="Watson M."/>
            <person name="Barron A."/>
            <person name="Layton A."/>
            <person name="Pickard D."/>
            <person name="Kingsley R.A."/>
            <person name="Bignell A."/>
            <person name="Clark L."/>
            <person name="Harris B."/>
            <person name="Ormond D."/>
            <person name="Abdellah Z."/>
            <person name="Brooks K."/>
            <person name="Cherevach I."/>
            <person name="Chillingworth T."/>
            <person name="Woodward J."/>
            <person name="Norberczak H."/>
            <person name="Lord A."/>
            <person name="Arrowsmith C."/>
            <person name="Jagels K."/>
            <person name="Moule S."/>
            <person name="Mungall K."/>
            <person name="Saunders M."/>
            <person name="Whitehead S."/>
            <person name="Chabalgoity J.A."/>
            <person name="Maskell D."/>
            <person name="Humphreys T."/>
            <person name="Roberts M."/>
            <person name="Barrow P.A."/>
            <person name="Dougan G."/>
            <person name="Parkhill J."/>
        </authorList>
    </citation>
    <scope>NUCLEOTIDE SEQUENCE [LARGE SCALE GENOMIC DNA]</scope>
    <source>
        <strain>P125109</strain>
    </source>
</reference>
<name>CEDA_SALEP</name>
<organism>
    <name type="scientific">Salmonella enteritidis PT4 (strain P125109)</name>
    <dbReference type="NCBI Taxonomy" id="550537"/>
    <lineage>
        <taxon>Bacteria</taxon>
        <taxon>Pseudomonadati</taxon>
        <taxon>Pseudomonadota</taxon>
        <taxon>Gammaproteobacteria</taxon>
        <taxon>Enterobacterales</taxon>
        <taxon>Enterobacteriaceae</taxon>
        <taxon>Salmonella</taxon>
    </lineage>
</organism>
<comment type="function">
    <text evidence="1">Activates the cell division inhibited by chromosomal DNA over-replication.</text>
</comment>
<comment type="similarity">
    <text evidence="1">Belongs to the CedA family.</text>
</comment>
<gene>
    <name evidence="1" type="primary">cedA</name>
    <name type="ordered locus">SEN1724</name>
</gene>
<keyword id="KW-0131">Cell cycle</keyword>
<keyword id="KW-0132">Cell division</keyword>
<keyword id="KW-0238">DNA-binding</keyword>
<sequence>MMKPLRQQNRQIISYIPRVEPAPPEHAIKMDTFRDVWILRGKYVAFVLTGESFQRSPAFSVPESAQRWANQVRQENEIAD</sequence>
<protein>
    <recommendedName>
        <fullName evidence="1">Cell division activator CedA</fullName>
    </recommendedName>
</protein>
<feature type="chain" id="PRO_1000200991" description="Cell division activator CedA">
    <location>
        <begin position="1"/>
        <end position="80"/>
    </location>
</feature>
<accession>B5QWH4</accession>